<sequence length="769" mass="86485">MDIGKKHVIPKSQYRRKRREFFHNEDREENLNQHQDKQNIDNTTSKKADKQIHKDSIDKHERFKNSLSSHLEQRNRDVNENKAEESKSNQDSKSAYNRDHYLTDDVSKKQNSLDSVDQDTEKSKYYEQNSEATLSTKSTDKVESTDMRKLSSDKNKVGHEEQHVLSKPSEHDKETRIDFESSRTDSDSSMQTEKIKKDSSDGNKSSNLKSEVISDKSNTVPKLSESDDEVNNQKPLTLPEEQKLKRQQSQNEQTKTYTYGDSEQNDKSNYENDLSHHMPSISDDKDNVMRENHIVDDNPDNDINTPSLSKTDDDRKLDEKIHVEDKHKQNADSSETVGYQSQSSASHRITEKRNNAINDHDKLNGQKPNAKTSANNNQKKATSKLNKGRATNNNYSDILKKFWMMYWPKLVILMGIIILIVILNAIFNNVNKNDRMNDNNDADAQKYTTTMKNANNTVKSVVTVENETSKDSSLPKDKASQDEVGSGVVYKKSGDTLYIVTNAHVVGDKENQKITFSNNKSVVGKVLGKDKWSDLAVVKATSSDSSVKEIAIGDSNNLVLGEPILVVGNPLGVDFKGTVTEGIISGLNRNVPIDFDKDNKYDMLMKAFQIDASVNPGNSGGAVVNREGKLIGVVAAKISMPNVENMSFAIPVNEVQKIVKDLETKGKIDYPDVGVKMKNIASLNSFERQAVKLPGKVKNGVVVDQVDNNGLADQSGLKKGDVITELDGKLLEDDLRFRQIIFSHKDDLKSITAKIYRDGKEKEINIKLK</sequence>
<reference key="1">
    <citation type="journal article" date="2002" name="Lancet">
        <title>Genome and virulence determinants of high virulence community-acquired MRSA.</title>
        <authorList>
            <person name="Baba T."/>
            <person name="Takeuchi F."/>
            <person name="Kuroda M."/>
            <person name="Yuzawa H."/>
            <person name="Aoki K."/>
            <person name="Oguchi A."/>
            <person name="Nagai Y."/>
            <person name="Iwama N."/>
            <person name="Asano K."/>
            <person name="Naimi T."/>
            <person name="Kuroda H."/>
            <person name="Cui L."/>
            <person name="Yamamoto K."/>
            <person name="Hiramatsu K."/>
        </authorList>
    </citation>
    <scope>NUCLEOTIDE SEQUENCE [LARGE SCALE GENOMIC DNA]</scope>
    <source>
        <strain>MW2</strain>
    </source>
</reference>
<gene>
    <name type="ordered locus">MW0903</name>
</gene>
<feature type="chain" id="PRO_0000252470" description="Serine protease HtrA-like">
    <location>
        <begin position="1"/>
        <end position="769"/>
    </location>
</feature>
<feature type="transmembrane region" description="Helical" evidence="1">
    <location>
        <begin position="410"/>
        <end position="430"/>
    </location>
</feature>
<feature type="domain" description="PDZ">
    <location>
        <begin position="680"/>
        <end position="733"/>
    </location>
</feature>
<feature type="region of interest" description="Disordered" evidence="2">
    <location>
        <begin position="1"/>
        <end position="390"/>
    </location>
</feature>
<feature type="compositionally biased region" description="Basic residues" evidence="2">
    <location>
        <begin position="1"/>
        <end position="20"/>
    </location>
</feature>
<feature type="compositionally biased region" description="Basic and acidic residues" evidence="2">
    <location>
        <begin position="21"/>
        <end position="64"/>
    </location>
</feature>
<feature type="compositionally biased region" description="Basic and acidic residues" evidence="2">
    <location>
        <begin position="71"/>
        <end position="108"/>
    </location>
</feature>
<feature type="compositionally biased region" description="Polar residues" evidence="2">
    <location>
        <begin position="126"/>
        <end position="137"/>
    </location>
</feature>
<feature type="compositionally biased region" description="Basic and acidic residues" evidence="2">
    <location>
        <begin position="138"/>
        <end position="186"/>
    </location>
</feature>
<feature type="compositionally biased region" description="Polar residues" evidence="2">
    <location>
        <begin position="247"/>
        <end position="262"/>
    </location>
</feature>
<feature type="compositionally biased region" description="Basic and acidic residues" evidence="2">
    <location>
        <begin position="264"/>
        <end position="296"/>
    </location>
</feature>
<feature type="compositionally biased region" description="Basic and acidic residues" evidence="2">
    <location>
        <begin position="310"/>
        <end position="330"/>
    </location>
</feature>
<feature type="compositionally biased region" description="Polar residues" evidence="2">
    <location>
        <begin position="331"/>
        <end position="347"/>
    </location>
</feature>
<feature type="compositionally biased region" description="Basic and acidic residues" evidence="2">
    <location>
        <begin position="348"/>
        <end position="364"/>
    </location>
</feature>
<feature type="compositionally biased region" description="Polar residues" evidence="2">
    <location>
        <begin position="366"/>
        <end position="390"/>
    </location>
</feature>
<feature type="active site" description="Charge relay system" evidence="1">
    <location>
        <position position="504"/>
    </location>
</feature>
<feature type="active site" description="Charge relay system" evidence="1">
    <location>
        <position position="534"/>
    </location>
</feature>
<feature type="active site" description="Charge relay system" evidence="1">
    <location>
        <position position="619"/>
    </location>
</feature>
<keyword id="KW-1003">Cell membrane</keyword>
<keyword id="KW-0378">Hydrolase</keyword>
<keyword id="KW-0472">Membrane</keyword>
<keyword id="KW-0645">Protease</keyword>
<keyword id="KW-0720">Serine protease</keyword>
<keyword id="KW-0812">Transmembrane</keyword>
<keyword id="KW-1133">Transmembrane helix</keyword>
<name>HTRAL_STAAW</name>
<organism>
    <name type="scientific">Staphylococcus aureus (strain MW2)</name>
    <dbReference type="NCBI Taxonomy" id="196620"/>
    <lineage>
        <taxon>Bacteria</taxon>
        <taxon>Bacillati</taxon>
        <taxon>Bacillota</taxon>
        <taxon>Bacilli</taxon>
        <taxon>Bacillales</taxon>
        <taxon>Staphylococcaceae</taxon>
        <taxon>Staphylococcus</taxon>
    </lineage>
</organism>
<evidence type="ECO:0000255" key="1"/>
<evidence type="ECO:0000256" key="2">
    <source>
        <dbReference type="SAM" id="MobiDB-lite"/>
    </source>
</evidence>
<evidence type="ECO:0000305" key="3"/>
<comment type="subcellular location">
    <subcellularLocation>
        <location evidence="3">Cell membrane</location>
        <topology evidence="3">Single-pass membrane protein</topology>
    </subcellularLocation>
</comment>
<comment type="similarity">
    <text evidence="3">Belongs to the peptidase S1C family.</text>
</comment>
<dbReference type="EC" id="3.4.21.-"/>
<dbReference type="EMBL" id="BA000033">
    <property type="protein sequence ID" value="BAB94768.1"/>
    <property type="molecule type" value="Genomic_DNA"/>
</dbReference>
<dbReference type="SMR" id="Q8NXB8"/>
<dbReference type="KEGG" id="sam:MW0903"/>
<dbReference type="HOGENOM" id="CLU_027421_0_0_9"/>
<dbReference type="GO" id="GO:0005886">
    <property type="term" value="C:plasma membrane"/>
    <property type="evidence" value="ECO:0007669"/>
    <property type="project" value="UniProtKB-SubCell"/>
</dbReference>
<dbReference type="GO" id="GO:0004252">
    <property type="term" value="F:serine-type endopeptidase activity"/>
    <property type="evidence" value="ECO:0007669"/>
    <property type="project" value="InterPro"/>
</dbReference>
<dbReference type="GO" id="GO:0006508">
    <property type="term" value="P:proteolysis"/>
    <property type="evidence" value="ECO:0007669"/>
    <property type="project" value="UniProtKB-KW"/>
</dbReference>
<dbReference type="CDD" id="cd06781">
    <property type="entry name" value="cpPDZ_BsHtra-like"/>
    <property type="match status" value="1"/>
</dbReference>
<dbReference type="Gene3D" id="2.30.42.10">
    <property type="match status" value="1"/>
</dbReference>
<dbReference type="Gene3D" id="2.40.10.10">
    <property type="entry name" value="Trypsin-like serine proteases"/>
    <property type="match status" value="2"/>
</dbReference>
<dbReference type="InterPro" id="IPR051201">
    <property type="entry name" value="Chloro_Bact_Ser_Proteases"/>
</dbReference>
<dbReference type="InterPro" id="IPR001478">
    <property type="entry name" value="PDZ"/>
</dbReference>
<dbReference type="InterPro" id="IPR036034">
    <property type="entry name" value="PDZ_sf"/>
</dbReference>
<dbReference type="InterPro" id="IPR009003">
    <property type="entry name" value="Peptidase_S1_PA"/>
</dbReference>
<dbReference type="InterPro" id="IPR043504">
    <property type="entry name" value="Peptidase_S1_PA_chymotrypsin"/>
</dbReference>
<dbReference type="InterPro" id="IPR001940">
    <property type="entry name" value="Peptidase_S1C"/>
</dbReference>
<dbReference type="PANTHER" id="PTHR43343">
    <property type="entry name" value="PEPTIDASE S12"/>
    <property type="match status" value="1"/>
</dbReference>
<dbReference type="PANTHER" id="PTHR43343:SF3">
    <property type="entry name" value="PROTEASE DO-LIKE 8, CHLOROPLASTIC"/>
    <property type="match status" value="1"/>
</dbReference>
<dbReference type="Pfam" id="PF13180">
    <property type="entry name" value="PDZ_2"/>
    <property type="match status" value="1"/>
</dbReference>
<dbReference type="Pfam" id="PF13365">
    <property type="entry name" value="Trypsin_2"/>
    <property type="match status" value="1"/>
</dbReference>
<dbReference type="PRINTS" id="PR00834">
    <property type="entry name" value="PROTEASES2C"/>
</dbReference>
<dbReference type="SMART" id="SM00228">
    <property type="entry name" value="PDZ"/>
    <property type="match status" value="1"/>
</dbReference>
<dbReference type="SUPFAM" id="SSF50156">
    <property type="entry name" value="PDZ domain-like"/>
    <property type="match status" value="1"/>
</dbReference>
<dbReference type="SUPFAM" id="SSF50494">
    <property type="entry name" value="Trypsin-like serine proteases"/>
    <property type="match status" value="1"/>
</dbReference>
<proteinExistence type="inferred from homology"/>
<accession>Q8NXB8</accession>
<protein>
    <recommendedName>
        <fullName>Serine protease HtrA-like</fullName>
        <ecNumber>3.4.21.-</ecNumber>
    </recommendedName>
</protein>